<feature type="chain" id="PRO_0000187110" description="2-dehydro-3-deoxyphosphooctonate aldolase 1">
    <location>
        <begin position="1"/>
        <end position="284"/>
    </location>
</feature>
<name>KDSA1_BURPS</name>
<sequence>MNLAGFEVGLDKPFFLIAGTCVVESEQMTIDTAGRLKEICATLGVPFIYKSSYDKANRSSGKSFRGLGMDEGLRILAEVKRQLNVPVLTDVHEIDEIAPVAAVVDVLQTPAFLCRQTDFIRACAQSGKPVNIKKGQFLAPHDMKNVIDKARDAARDAGLSEDRFMACERGVSFGYNNLVSDMRSLAIMRETGAPVVFDATHSVQLPGGQGTSSGGQREFVPVLARAALATGVAGLFMETHPNPAEAKSDGPNAVPLGRMAALLETLVTLDRAVKRVPFLENDFN</sequence>
<gene>
    <name evidence="1" type="primary">kdsA1</name>
    <name type="ordered locus">BPSL2271</name>
</gene>
<accession>Q63SP9</accession>
<protein>
    <recommendedName>
        <fullName evidence="1">2-dehydro-3-deoxyphosphooctonate aldolase 1</fullName>
        <ecNumber evidence="1">2.5.1.55</ecNumber>
    </recommendedName>
    <alternativeName>
        <fullName evidence="1">3-deoxy-D-manno-octulosonic acid 8-phosphate synthase 1</fullName>
    </alternativeName>
    <alternativeName>
        <fullName evidence="1">KDO-8-phosphate synthase 1</fullName>
        <shortName evidence="1">KDO 8-P synthase 1</shortName>
        <shortName evidence="1">KDOPS 1</shortName>
    </alternativeName>
    <alternativeName>
        <fullName evidence="1">Phospho-2-dehydro-3-deoxyoctonate aldolase 1</fullName>
    </alternativeName>
</protein>
<proteinExistence type="inferred from homology"/>
<comment type="catalytic activity">
    <reaction evidence="1">
        <text>D-arabinose 5-phosphate + phosphoenolpyruvate + H2O = 3-deoxy-alpha-D-manno-2-octulosonate-8-phosphate + phosphate</text>
        <dbReference type="Rhea" id="RHEA:14053"/>
        <dbReference type="ChEBI" id="CHEBI:15377"/>
        <dbReference type="ChEBI" id="CHEBI:43474"/>
        <dbReference type="ChEBI" id="CHEBI:57693"/>
        <dbReference type="ChEBI" id="CHEBI:58702"/>
        <dbReference type="ChEBI" id="CHEBI:85985"/>
        <dbReference type="EC" id="2.5.1.55"/>
    </reaction>
</comment>
<comment type="pathway">
    <text evidence="1">Carbohydrate biosynthesis; 3-deoxy-D-manno-octulosonate biosynthesis; 3-deoxy-D-manno-octulosonate from D-ribulose 5-phosphate: step 2/3.</text>
</comment>
<comment type="pathway">
    <text evidence="1">Bacterial outer membrane biogenesis; lipopolysaccharide biosynthesis.</text>
</comment>
<comment type="subcellular location">
    <subcellularLocation>
        <location evidence="1">Cytoplasm</location>
    </subcellularLocation>
</comment>
<comment type="similarity">
    <text evidence="1">Belongs to the KdsA family.</text>
</comment>
<organism>
    <name type="scientific">Burkholderia pseudomallei (strain K96243)</name>
    <dbReference type="NCBI Taxonomy" id="272560"/>
    <lineage>
        <taxon>Bacteria</taxon>
        <taxon>Pseudomonadati</taxon>
        <taxon>Pseudomonadota</taxon>
        <taxon>Betaproteobacteria</taxon>
        <taxon>Burkholderiales</taxon>
        <taxon>Burkholderiaceae</taxon>
        <taxon>Burkholderia</taxon>
        <taxon>pseudomallei group</taxon>
    </lineage>
</organism>
<dbReference type="EC" id="2.5.1.55" evidence="1"/>
<dbReference type="EMBL" id="BX571965">
    <property type="protein sequence ID" value="CAH36274.1"/>
    <property type="molecule type" value="Genomic_DNA"/>
</dbReference>
<dbReference type="RefSeq" id="YP_108867.1">
    <property type="nucleotide sequence ID" value="NC_006350.1"/>
</dbReference>
<dbReference type="SMR" id="Q63SP9"/>
<dbReference type="STRING" id="272560.BPSL2271"/>
<dbReference type="KEGG" id="bps:BPSL2271"/>
<dbReference type="PATRIC" id="fig|272560.51.peg.3159"/>
<dbReference type="eggNOG" id="COG2877">
    <property type="taxonomic scope" value="Bacteria"/>
</dbReference>
<dbReference type="UniPathway" id="UPA00030"/>
<dbReference type="UniPathway" id="UPA00357">
    <property type="reaction ID" value="UER00474"/>
</dbReference>
<dbReference type="Proteomes" id="UP000000605">
    <property type="component" value="Chromosome 1"/>
</dbReference>
<dbReference type="GO" id="GO:0005737">
    <property type="term" value="C:cytoplasm"/>
    <property type="evidence" value="ECO:0007669"/>
    <property type="project" value="UniProtKB-SubCell"/>
</dbReference>
<dbReference type="GO" id="GO:0008676">
    <property type="term" value="F:3-deoxy-8-phosphooctulonate synthase activity"/>
    <property type="evidence" value="ECO:0007669"/>
    <property type="project" value="UniProtKB-UniRule"/>
</dbReference>
<dbReference type="GO" id="GO:0019294">
    <property type="term" value="P:keto-3-deoxy-D-manno-octulosonic acid biosynthetic process"/>
    <property type="evidence" value="ECO:0007669"/>
    <property type="project" value="UniProtKB-UniRule"/>
</dbReference>
<dbReference type="Gene3D" id="3.20.20.70">
    <property type="entry name" value="Aldolase class I"/>
    <property type="match status" value="1"/>
</dbReference>
<dbReference type="HAMAP" id="MF_00056">
    <property type="entry name" value="KDO8P_synth"/>
    <property type="match status" value="1"/>
</dbReference>
<dbReference type="InterPro" id="IPR013785">
    <property type="entry name" value="Aldolase_TIM"/>
</dbReference>
<dbReference type="InterPro" id="IPR006218">
    <property type="entry name" value="DAHP1/KDSA"/>
</dbReference>
<dbReference type="InterPro" id="IPR006269">
    <property type="entry name" value="KDO8P_synthase"/>
</dbReference>
<dbReference type="NCBIfam" id="TIGR01362">
    <property type="entry name" value="KDO8P_synth"/>
    <property type="match status" value="1"/>
</dbReference>
<dbReference type="NCBIfam" id="NF003543">
    <property type="entry name" value="PRK05198.1"/>
    <property type="match status" value="1"/>
</dbReference>
<dbReference type="PANTHER" id="PTHR21057">
    <property type="entry name" value="PHOSPHO-2-DEHYDRO-3-DEOXYHEPTONATE ALDOLASE"/>
    <property type="match status" value="1"/>
</dbReference>
<dbReference type="Pfam" id="PF00793">
    <property type="entry name" value="DAHP_synth_1"/>
    <property type="match status" value="1"/>
</dbReference>
<dbReference type="SUPFAM" id="SSF51569">
    <property type="entry name" value="Aldolase"/>
    <property type="match status" value="1"/>
</dbReference>
<evidence type="ECO:0000255" key="1">
    <source>
        <dbReference type="HAMAP-Rule" id="MF_00056"/>
    </source>
</evidence>
<keyword id="KW-0963">Cytoplasm</keyword>
<keyword id="KW-0448">Lipopolysaccharide biosynthesis</keyword>
<keyword id="KW-1185">Reference proteome</keyword>
<keyword id="KW-0808">Transferase</keyword>
<reference key="1">
    <citation type="journal article" date="2004" name="Proc. Natl. Acad. Sci. U.S.A.">
        <title>Genomic plasticity of the causative agent of melioidosis, Burkholderia pseudomallei.</title>
        <authorList>
            <person name="Holden M.T.G."/>
            <person name="Titball R.W."/>
            <person name="Peacock S.J."/>
            <person name="Cerdeno-Tarraga A.-M."/>
            <person name="Atkins T."/>
            <person name="Crossman L.C."/>
            <person name="Pitt T."/>
            <person name="Churcher C."/>
            <person name="Mungall K.L."/>
            <person name="Bentley S.D."/>
            <person name="Sebaihia M."/>
            <person name="Thomson N.R."/>
            <person name="Bason N."/>
            <person name="Beacham I.R."/>
            <person name="Brooks K."/>
            <person name="Brown K.A."/>
            <person name="Brown N.F."/>
            <person name="Challis G.L."/>
            <person name="Cherevach I."/>
            <person name="Chillingworth T."/>
            <person name="Cronin A."/>
            <person name="Crossett B."/>
            <person name="Davis P."/>
            <person name="DeShazer D."/>
            <person name="Feltwell T."/>
            <person name="Fraser A."/>
            <person name="Hance Z."/>
            <person name="Hauser H."/>
            <person name="Holroyd S."/>
            <person name="Jagels K."/>
            <person name="Keith K.E."/>
            <person name="Maddison M."/>
            <person name="Moule S."/>
            <person name="Price C."/>
            <person name="Quail M.A."/>
            <person name="Rabbinowitsch E."/>
            <person name="Rutherford K."/>
            <person name="Sanders M."/>
            <person name="Simmonds M."/>
            <person name="Songsivilai S."/>
            <person name="Stevens K."/>
            <person name="Tumapa S."/>
            <person name="Vesaratchavest M."/>
            <person name="Whitehead S."/>
            <person name="Yeats C."/>
            <person name="Barrell B.G."/>
            <person name="Oyston P.C.F."/>
            <person name="Parkhill J."/>
        </authorList>
    </citation>
    <scope>NUCLEOTIDE SEQUENCE [LARGE SCALE GENOMIC DNA]</scope>
    <source>
        <strain>K96243</strain>
    </source>
</reference>